<feature type="chain" id="PRO_0000168861" description="Probable two-component-system connector protein YcgZ">
    <location>
        <begin position="1"/>
        <end position="78"/>
    </location>
</feature>
<comment type="function">
    <text>Probably a connector protein for RcsB/C regulation of biofilm formation, providing additional signal input into the two-component signaling pathway. Partially antagonizes the activities of YmgA and AriR, proteins that, via the Rcs phosphorelay, promote the synthesis of colanic acid, an exopolysaccharide and matrix component.</text>
</comment>
<comment type="induction">
    <text evidence="1 2 3 4">Expressed constitutively at low levels, slightly induced upon entry into stationary phase at 37 degrees Celsius. Induced by 5-fluorouracil. Strongly induced at 16 and 23 degrees Celsius. Expression is partially dependent on RpoS, it is repressed by YcgE. At 16 degrees Celsius with blue light irradiation, expression of this operon is absolutely dependent on YcgF for relief from YcgE repression. Part of the ycgZ-ymgA-ariR-ymgC operon.</text>
</comment>
<evidence type="ECO:0000269" key="1">
    <source>
    </source>
</evidence>
<evidence type="ECO:0000269" key="2">
    <source>
    </source>
</evidence>
<evidence type="ECO:0000269" key="3">
    <source>
    </source>
</evidence>
<evidence type="ECO:0000269" key="4">
    <source>
    </source>
</evidence>
<accession>P75991</accession>
<accession>Q2MBH1</accession>
<keyword id="KW-1185">Reference proteome</keyword>
<protein>
    <recommendedName>
        <fullName>Probable two-component-system connector protein YcgZ</fullName>
    </recommendedName>
</protein>
<gene>
    <name type="primary">ycgZ</name>
    <name type="ordered locus">b1164</name>
    <name type="ordered locus">JW1151</name>
</gene>
<sequence length="78" mass="8769">MHQNSVTLDSAGAITRYFAKANLHTQQETLGEIVTEILKDGRNLSRKSLCAKLLCRLEHATGEEEQKHYNALIGLLFE</sequence>
<name>YCGZ_ECOLI</name>
<organism>
    <name type="scientific">Escherichia coli (strain K12)</name>
    <dbReference type="NCBI Taxonomy" id="83333"/>
    <lineage>
        <taxon>Bacteria</taxon>
        <taxon>Pseudomonadati</taxon>
        <taxon>Pseudomonadota</taxon>
        <taxon>Gammaproteobacteria</taxon>
        <taxon>Enterobacterales</taxon>
        <taxon>Enterobacteriaceae</taxon>
        <taxon>Escherichia</taxon>
    </lineage>
</organism>
<proteinExistence type="evidence at transcript level"/>
<dbReference type="EMBL" id="U00096">
    <property type="protein sequence ID" value="AAC74248.1"/>
    <property type="molecule type" value="Genomic_DNA"/>
</dbReference>
<dbReference type="EMBL" id="AP009048">
    <property type="protein sequence ID" value="BAE76385.1"/>
    <property type="molecule type" value="Genomic_DNA"/>
</dbReference>
<dbReference type="PIR" id="A64862">
    <property type="entry name" value="A64862"/>
</dbReference>
<dbReference type="RefSeq" id="NP_415682.1">
    <property type="nucleotide sequence ID" value="NC_000913.3"/>
</dbReference>
<dbReference type="RefSeq" id="WP_000554140.1">
    <property type="nucleotide sequence ID" value="NZ_SSZK01000010.1"/>
</dbReference>
<dbReference type="SMR" id="P75991"/>
<dbReference type="BioGRID" id="4259500">
    <property type="interactions" value="16"/>
</dbReference>
<dbReference type="FunCoup" id="P75991">
    <property type="interactions" value="188"/>
</dbReference>
<dbReference type="IntAct" id="P75991">
    <property type="interactions" value="9"/>
</dbReference>
<dbReference type="STRING" id="511145.b1164"/>
<dbReference type="jPOST" id="P75991"/>
<dbReference type="PaxDb" id="511145-b1164"/>
<dbReference type="EnsemblBacteria" id="AAC74248">
    <property type="protein sequence ID" value="AAC74248"/>
    <property type="gene ID" value="b1164"/>
</dbReference>
<dbReference type="GeneID" id="945885"/>
<dbReference type="KEGG" id="ecj:JW1151"/>
<dbReference type="KEGG" id="eco:b1164"/>
<dbReference type="KEGG" id="ecoc:C3026_06860"/>
<dbReference type="PATRIC" id="fig|1411691.4.peg.1126"/>
<dbReference type="EchoBASE" id="EB4036"/>
<dbReference type="eggNOG" id="ENOG5032RTK">
    <property type="taxonomic scope" value="Bacteria"/>
</dbReference>
<dbReference type="HOGENOM" id="CLU_164045_0_0_6"/>
<dbReference type="InParanoid" id="P75991"/>
<dbReference type="OMA" id="NPMIEND"/>
<dbReference type="OrthoDB" id="6420902at2"/>
<dbReference type="BioCyc" id="EcoCyc:G6604-MONOMER"/>
<dbReference type="PRO" id="PR:P75991"/>
<dbReference type="Proteomes" id="UP000000625">
    <property type="component" value="Chromosome"/>
</dbReference>
<dbReference type="GO" id="GO:0071468">
    <property type="term" value="P:cellular response to acidic pH"/>
    <property type="evidence" value="ECO:0007669"/>
    <property type="project" value="InterPro"/>
</dbReference>
<dbReference type="GO" id="GO:0045892">
    <property type="term" value="P:negative regulation of DNA-templated transcription"/>
    <property type="evidence" value="ECO:0000315"/>
    <property type="project" value="EcoCyc"/>
</dbReference>
<dbReference type="Gene3D" id="1.20.5.5260">
    <property type="match status" value="1"/>
</dbReference>
<dbReference type="InterPro" id="IPR024753">
    <property type="entry name" value="AriR"/>
</dbReference>
<dbReference type="NCBIfam" id="NF040640">
    <property type="entry name" value="YcgZ_fam"/>
    <property type="match status" value="1"/>
</dbReference>
<dbReference type="Pfam" id="PF10798">
    <property type="entry name" value="YmgB"/>
    <property type="match status" value="1"/>
</dbReference>
<reference key="1">
    <citation type="journal article" date="1997" name="Science">
        <title>The complete genome sequence of Escherichia coli K-12.</title>
        <authorList>
            <person name="Blattner F.R."/>
            <person name="Plunkett G. III"/>
            <person name="Bloch C.A."/>
            <person name="Perna N.T."/>
            <person name="Burland V."/>
            <person name="Riley M."/>
            <person name="Collado-Vides J."/>
            <person name="Glasner J.D."/>
            <person name="Rode C.K."/>
            <person name="Mayhew G.F."/>
            <person name="Gregor J."/>
            <person name="Davis N.W."/>
            <person name="Kirkpatrick H.A."/>
            <person name="Goeden M.A."/>
            <person name="Rose D.J."/>
            <person name="Mau B."/>
            <person name="Shao Y."/>
        </authorList>
    </citation>
    <scope>NUCLEOTIDE SEQUENCE [LARGE SCALE GENOMIC DNA]</scope>
    <source>
        <strain>K12 / MG1655 / ATCC 47076</strain>
    </source>
</reference>
<reference key="2">
    <citation type="journal article" date="2006" name="Mol. Syst. Biol.">
        <title>Highly accurate genome sequences of Escherichia coli K-12 strains MG1655 and W3110.</title>
        <authorList>
            <person name="Hayashi K."/>
            <person name="Morooka N."/>
            <person name="Yamamoto Y."/>
            <person name="Fujita K."/>
            <person name="Isono K."/>
            <person name="Choi S."/>
            <person name="Ohtsubo E."/>
            <person name="Baba T."/>
            <person name="Wanner B.L."/>
            <person name="Mori H."/>
            <person name="Horiuchi T."/>
        </authorList>
    </citation>
    <scope>NUCLEOTIDE SEQUENCE [LARGE SCALE GENOMIC DNA]</scope>
    <source>
        <strain>K12 / W3110 / ATCC 27325 / DSM 5911</strain>
    </source>
</reference>
<reference key="3">
    <citation type="journal article" date="2003" name="Res. Microbiol.">
        <title>Changes in Escherichia coli transcriptome during acclimatization at low temperature.</title>
        <authorList>
            <person name="Polissi A."/>
            <person name="De Laurentis W."/>
            <person name="Zangrossi S."/>
            <person name="Briani F."/>
            <person name="Longhi V."/>
            <person name="Pesole G."/>
            <person name="Deho G."/>
        </authorList>
    </citation>
    <scope>INDUCTION BY COLD SHOCK</scope>
    <source>
        <strain>K12 / MG1655 / ATCC 47076</strain>
    </source>
</reference>
<reference key="4">
    <citation type="journal article" date="2008" name="Microbiology">
        <title>Low temperature (23 degrees C) increases expression of biofilm-, cold-shock- and RpoS-dependent genes in Escherichia coli K-12.</title>
        <authorList>
            <person name="White-Ziegler C.A."/>
            <person name="Um S."/>
            <person name="Perez N.M."/>
            <person name="Berns A.L."/>
            <person name="Malhowski A.J."/>
            <person name="Young S."/>
        </authorList>
    </citation>
    <scope>INDUCTION BY COLD SHOCK</scope>
    <scope>RPOS-DEPENDENCE</scope>
    <source>
        <strain>K12 / MC4100</strain>
    </source>
</reference>
<reference key="5">
    <citation type="journal article" date="2009" name="Appl. Microbiol. Biotechnol.">
        <title>5-Fluorouracil reduces biofilm formation in Escherichia coli K-12 through global regulator AriR as an antivirulence compound.</title>
        <authorList>
            <person name="Attila C."/>
            <person name="Ueda A."/>
            <person name="Wood T.K."/>
        </authorList>
    </citation>
    <scope>INDUCTION BY 5-FLUOROURACIL</scope>
    <source>
        <strain>K12 / ATCC 25404 / DSM 5698 / NCIMB 11290</strain>
    </source>
</reference>
<reference key="6">
    <citation type="journal article" date="2009" name="Genes Dev.">
        <title>The BLUF-EAL protein YcgF acts as a direct anti-repressor in a blue-light response of Escherichia coli.</title>
        <authorList>
            <person name="Tschowri N."/>
            <person name="Busse S."/>
            <person name="Hengge R."/>
        </authorList>
    </citation>
    <scope>INDUCTION BY COLD SHOCK</scope>
    <scope>RPOS-DEPENDENCE</scope>
    <scope>REPRESSION BY YCGE</scope>
    <scope>OPERON STRUCTURE</scope>
    <source>
        <strain>K12 / MC4100</strain>
    </source>
</reference>